<evidence type="ECO:0000250" key="1"/>
<evidence type="ECO:0000255" key="2">
    <source>
        <dbReference type="PROSITE-ProRule" id="PRU00560"/>
    </source>
</evidence>
<evidence type="ECO:0000255" key="3">
    <source>
        <dbReference type="PROSITE-ProRule" id="PRU00617"/>
    </source>
</evidence>
<evidence type="ECO:0000305" key="4"/>
<dbReference type="EC" id="5.6.2.4"/>
<dbReference type="EMBL" id="AF233324">
    <property type="protein sequence ID" value="AAF33441.1"/>
    <property type="molecule type" value="Genomic_DNA"/>
</dbReference>
<dbReference type="EMBL" id="AE006468">
    <property type="protein sequence ID" value="AAL22795.1"/>
    <property type="molecule type" value="Genomic_DNA"/>
</dbReference>
<dbReference type="EMBL" id="L11043">
    <property type="protein sequence ID" value="AAA02965.1"/>
    <property type="molecule type" value="Unassigned_DNA"/>
</dbReference>
<dbReference type="RefSeq" id="NP_462836.1">
    <property type="nucleotide sequence ID" value="NC_003197.2"/>
</dbReference>
<dbReference type="RefSeq" id="WP_000383441.1">
    <property type="nucleotide sequence ID" value="NC_003197.2"/>
</dbReference>
<dbReference type="SMR" id="Q05311"/>
<dbReference type="STRING" id="99287.STM3951"/>
<dbReference type="PaxDb" id="99287-STM3951"/>
<dbReference type="GeneID" id="1255477"/>
<dbReference type="KEGG" id="stm:STM3951"/>
<dbReference type="PATRIC" id="fig|99287.12.peg.4169"/>
<dbReference type="HOGENOM" id="CLU_004585_5_5_6"/>
<dbReference type="OMA" id="DYPDATT"/>
<dbReference type="PhylomeDB" id="Q05311"/>
<dbReference type="BioCyc" id="SENT99287:STM3951-MONOMER"/>
<dbReference type="Proteomes" id="UP000001014">
    <property type="component" value="Chromosome"/>
</dbReference>
<dbReference type="GO" id="GO:0005829">
    <property type="term" value="C:cytosol"/>
    <property type="evidence" value="ECO:0000318"/>
    <property type="project" value="GO_Central"/>
</dbReference>
<dbReference type="GO" id="GO:0033202">
    <property type="term" value="C:DNA helicase complex"/>
    <property type="evidence" value="ECO:0000318"/>
    <property type="project" value="GO_Central"/>
</dbReference>
<dbReference type="GO" id="GO:0043138">
    <property type="term" value="F:3'-5' DNA helicase activity"/>
    <property type="evidence" value="ECO:0000318"/>
    <property type="project" value="GO_Central"/>
</dbReference>
<dbReference type="GO" id="GO:0005524">
    <property type="term" value="F:ATP binding"/>
    <property type="evidence" value="ECO:0007669"/>
    <property type="project" value="UniProtKB-KW"/>
</dbReference>
<dbReference type="GO" id="GO:0016887">
    <property type="term" value="F:ATP hydrolysis activity"/>
    <property type="evidence" value="ECO:0007669"/>
    <property type="project" value="RHEA"/>
</dbReference>
<dbReference type="GO" id="GO:0003677">
    <property type="term" value="F:DNA binding"/>
    <property type="evidence" value="ECO:0007669"/>
    <property type="project" value="UniProtKB-KW"/>
</dbReference>
<dbReference type="GO" id="GO:0006260">
    <property type="term" value="P:DNA replication"/>
    <property type="evidence" value="ECO:0007669"/>
    <property type="project" value="UniProtKB-KW"/>
</dbReference>
<dbReference type="GO" id="GO:0000725">
    <property type="term" value="P:recombinational repair"/>
    <property type="evidence" value="ECO:0000318"/>
    <property type="project" value="GO_Central"/>
</dbReference>
<dbReference type="GO" id="GO:0009432">
    <property type="term" value="P:SOS response"/>
    <property type="evidence" value="ECO:0007669"/>
    <property type="project" value="UniProtKB-KW"/>
</dbReference>
<dbReference type="CDD" id="cd17932">
    <property type="entry name" value="DEXQc_UvrD"/>
    <property type="match status" value="1"/>
</dbReference>
<dbReference type="CDD" id="cd18807">
    <property type="entry name" value="SF1_C_UvrD"/>
    <property type="match status" value="1"/>
</dbReference>
<dbReference type="FunFam" id="3.40.50.300:FF:001201">
    <property type="entry name" value="ATP-dependent DNA helicase UvrD2"/>
    <property type="match status" value="1"/>
</dbReference>
<dbReference type="FunFam" id="1.10.10.160:FF:000002">
    <property type="entry name" value="DNA helicase"/>
    <property type="match status" value="1"/>
</dbReference>
<dbReference type="FunFam" id="1.10.486.10:FF:000001">
    <property type="entry name" value="DNA helicase"/>
    <property type="match status" value="1"/>
</dbReference>
<dbReference type="Gene3D" id="1.10.10.160">
    <property type="match status" value="1"/>
</dbReference>
<dbReference type="Gene3D" id="3.40.50.300">
    <property type="entry name" value="P-loop containing nucleotide triphosphate hydrolases"/>
    <property type="match status" value="2"/>
</dbReference>
<dbReference type="Gene3D" id="1.10.486.10">
    <property type="entry name" value="PCRA, domain 4"/>
    <property type="match status" value="1"/>
</dbReference>
<dbReference type="InterPro" id="IPR013986">
    <property type="entry name" value="DExx_box_DNA_helicase_dom_sf"/>
</dbReference>
<dbReference type="InterPro" id="IPR005753">
    <property type="entry name" value="DNA_helicase_ATP-dep_UvrD"/>
</dbReference>
<dbReference type="InterPro" id="IPR014017">
    <property type="entry name" value="DNA_helicase_UvrD-like_C"/>
</dbReference>
<dbReference type="InterPro" id="IPR000212">
    <property type="entry name" value="DNA_helicase_UvrD/REP"/>
</dbReference>
<dbReference type="InterPro" id="IPR027417">
    <property type="entry name" value="P-loop_NTPase"/>
</dbReference>
<dbReference type="InterPro" id="IPR014016">
    <property type="entry name" value="UvrD-like_ATP-bd"/>
</dbReference>
<dbReference type="NCBIfam" id="NF008743">
    <property type="entry name" value="PRK11773.1"/>
    <property type="match status" value="1"/>
</dbReference>
<dbReference type="NCBIfam" id="TIGR01075">
    <property type="entry name" value="uvrD"/>
    <property type="match status" value="1"/>
</dbReference>
<dbReference type="PANTHER" id="PTHR11070:SF2">
    <property type="entry name" value="ATP-DEPENDENT DNA HELICASE SRS2"/>
    <property type="match status" value="1"/>
</dbReference>
<dbReference type="PANTHER" id="PTHR11070">
    <property type="entry name" value="UVRD / RECB / PCRA DNA HELICASE FAMILY MEMBER"/>
    <property type="match status" value="1"/>
</dbReference>
<dbReference type="Pfam" id="PF21196">
    <property type="entry name" value="PcrA_UvrD_tudor"/>
    <property type="match status" value="1"/>
</dbReference>
<dbReference type="Pfam" id="PF00580">
    <property type="entry name" value="UvrD-helicase"/>
    <property type="match status" value="1"/>
</dbReference>
<dbReference type="Pfam" id="PF13361">
    <property type="entry name" value="UvrD_C"/>
    <property type="match status" value="1"/>
</dbReference>
<dbReference type="SUPFAM" id="SSF52540">
    <property type="entry name" value="P-loop containing nucleoside triphosphate hydrolases"/>
    <property type="match status" value="1"/>
</dbReference>
<dbReference type="PROSITE" id="PS51198">
    <property type="entry name" value="UVRD_HELICASE_ATP_BIND"/>
    <property type="match status" value="1"/>
</dbReference>
<dbReference type="PROSITE" id="PS51217">
    <property type="entry name" value="UVRD_HELICASE_CTER"/>
    <property type="match status" value="1"/>
</dbReference>
<feature type="chain" id="PRO_0000102073" description="DNA helicase II">
    <location>
        <begin position="1"/>
        <end position="720"/>
    </location>
</feature>
<feature type="domain" description="UvrD-like helicase ATP-binding" evidence="2">
    <location>
        <begin position="8"/>
        <end position="286"/>
    </location>
</feature>
<feature type="domain" description="UvrD-like helicase C-terminal" evidence="3">
    <location>
        <begin position="287"/>
        <end position="564"/>
    </location>
</feature>
<feature type="binding site" evidence="2">
    <location>
        <begin position="32"/>
        <end position="37"/>
    </location>
    <ligand>
        <name>ATP</name>
        <dbReference type="ChEBI" id="CHEBI:30616"/>
    </ligand>
</feature>
<feature type="binding site" evidence="1">
    <location>
        <position position="284"/>
    </location>
    <ligand>
        <name>ATP</name>
        <dbReference type="ChEBI" id="CHEBI:30616"/>
    </ligand>
</feature>
<reference key="1">
    <citation type="journal article" date="2001" name="Nature">
        <title>Complete genome sequence of Salmonella enterica serovar Typhimurium LT2.</title>
        <authorList>
            <person name="McClelland M."/>
            <person name="Sanderson K.E."/>
            <person name="Spieth J."/>
            <person name="Clifton S.W."/>
            <person name="Latreille P."/>
            <person name="Courtney L."/>
            <person name="Porwollik S."/>
            <person name="Ali J."/>
            <person name="Dante M."/>
            <person name="Du F."/>
            <person name="Hou S."/>
            <person name="Layman D."/>
            <person name="Leonard S."/>
            <person name="Nguyen C."/>
            <person name="Scott K."/>
            <person name="Holmes A."/>
            <person name="Grewal N."/>
            <person name="Mulvaney E."/>
            <person name="Ryan E."/>
            <person name="Sun H."/>
            <person name="Florea L."/>
            <person name="Miller W."/>
            <person name="Stoneking T."/>
            <person name="Nhan M."/>
            <person name="Waterston R."/>
            <person name="Wilson R.K."/>
        </authorList>
    </citation>
    <scope>NUCLEOTIDE SEQUENCE [LARGE SCALE GENOMIC DNA]</scope>
    <source>
        <strain>LT2 / SGSC1412 / ATCC 700720</strain>
    </source>
</reference>
<reference key="2">
    <citation type="journal article" date="1993" name="J. Biol. Chem.">
        <title>Sequence and topology of the CorA magnesium transport systems of Salmonella typhimurium and Escherichia coli. Identification of a new class of transport protein.</title>
        <authorList>
            <person name="Smith R.L."/>
            <person name="Banks J.L."/>
            <person name="Snavely M.D."/>
            <person name="Maguire M.E."/>
        </authorList>
    </citation>
    <scope>NUCLEOTIDE SEQUENCE [GENOMIC DNA] OF 708-720</scope>
</reference>
<gene>
    <name type="primary">uvrD</name>
    <name type="ordered locus">STM3951</name>
    <name type="ORF">STMD1.39</name>
</gene>
<keyword id="KW-0067">ATP-binding</keyword>
<keyword id="KW-0227">DNA damage</keyword>
<keyword id="KW-0234">DNA repair</keyword>
<keyword id="KW-0235">DNA replication</keyword>
<keyword id="KW-0238">DNA-binding</keyword>
<keyword id="KW-0347">Helicase</keyword>
<keyword id="KW-0378">Hydrolase</keyword>
<keyword id="KW-0413">Isomerase</keyword>
<keyword id="KW-0547">Nucleotide-binding</keyword>
<keyword id="KW-1185">Reference proteome</keyword>
<keyword id="KW-0742">SOS response</keyword>
<organism>
    <name type="scientific">Salmonella typhimurium (strain LT2 / SGSC1412 / ATCC 700720)</name>
    <dbReference type="NCBI Taxonomy" id="99287"/>
    <lineage>
        <taxon>Bacteria</taxon>
        <taxon>Pseudomonadati</taxon>
        <taxon>Pseudomonadota</taxon>
        <taxon>Gammaproteobacteria</taxon>
        <taxon>Enterobacterales</taxon>
        <taxon>Enterobacteriaceae</taxon>
        <taxon>Salmonella</taxon>
    </lineage>
</organism>
<protein>
    <recommendedName>
        <fullName>DNA helicase II</fullName>
        <ecNumber>5.6.2.4</ecNumber>
    </recommendedName>
    <alternativeName>
        <fullName evidence="4">DNA 3'-5' helicase II</fullName>
    </alternativeName>
</protein>
<accession>Q05311</accession>
<accession>Q9L6P3</accession>
<proteinExistence type="inferred from homology"/>
<sequence length="720" mass="81981">MDVSYLLDSLNDKQREAVAAPRSNMLVLAGAGSGKTRVLVHRIAWLLSVENNSPYSIMAVTFTNKAAAEMRHRIGQLMGTSQGGMWVGTFHGLAHRLLRAHHMDANLPQDFQILDSEDQMRLLKRLIKAMNLDEKQWPPRQAMWYINSQKDEGLRPHHIQSYGNPVEQTWQKVYQAYQEACDRAGLVDFAELLLRAHELWLNKPHILQHYRERFTNILVDEFQDTNNIQYAWVRLLAGDTGKVMIVGDDDQSIYGWRGAQVENIQRFLNDFPGAQTIRLEQNYRSTSNILSAANALIENNNGRLGKKLWTDGVDGEPISLYCAFNELDEARFVVNRIKTWQDNGGALAQCAILYRSNAQSRVLEEALLQASMPYRIYGGMRFFERQEIKDALSYLRLIANRNDDAAFERVVNTPTRGIGDRTLDVVRQTSRDRQLTLWQVCRELLQEKALAGRAASALQRFMELIDALAQETADMPLHVQTDRVIKDSGLRTMYEQEKGEKGQTRIENLEELVTATRQFSYNDEDEDLMPLQAFLSHAALEAGEGQADTWQDAVQLMTLHSAKGLEFPQVFIVGMEEGMFPSQMSLDEGGRLEEERRLAYVGVTRAMQKLTLTYAETRRLYGKEVYHRPSRFIGELPEECVEEVRLRATVSRPVSHQRMGTPLAENDTGYKLGQRVRHAKFGEGTIVNLEGSGEHSRLQVAFQGQGIKWLVAAYAKLETV</sequence>
<comment type="function">
    <text>Has both ATPase and helicase activities. Unwinds DNA duplexes with 3' to 5' polarity with respect to the bound strand and initiates unwinding most effectively when a single-stranded region is present. Involved in the post-incision events of nucleotide excision repair and methyl-directed mismatch repair.</text>
</comment>
<comment type="catalytic activity">
    <reaction>
        <text>Couples ATP hydrolysis with the unwinding of duplex DNA by translocating in the 3'-5' direction.</text>
        <dbReference type="EC" id="5.6.2.4"/>
    </reaction>
</comment>
<comment type="catalytic activity">
    <reaction>
        <text>ATP + H2O = ADP + phosphate + H(+)</text>
        <dbReference type="Rhea" id="RHEA:13065"/>
        <dbReference type="ChEBI" id="CHEBI:15377"/>
        <dbReference type="ChEBI" id="CHEBI:15378"/>
        <dbReference type="ChEBI" id="CHEBI:30616"/>
        <dbReference type="ChEBI" id="CHEBI:43474"/>
        <dbReference type="ChEBI" id="CHEBI:456216"/>
        <dbReference type="EC" id="5.6.2.4"/>
    </reaction>
</comment>
<comment type="similarity">
    <text evidence="4">Belongs to the helicase family. UvrD subfamily.</text>
</comment>
<name>UVRD_SALTY</name>